<accession>Q874W3</accession>
<keyword id="KW-0129">CBS domain</keyword>
<keyword id="KW-0963">Cytoplasm</keyword>
<keyword id="KW-0539">Nucleus</keyword>
<keyword id="KW-0677">Repeat</keyword>
<protein>
    <recommendedName>
        <fullName>Protein SDS23</fullName>
    </recommendedName>
</protein>
<name>SDS23_PODAS</name>
<reference key="1">
    <citation type="journal article" date="2003" name="Fungal Genet. Biol.">
        <title>Characterization of the genomic organization of the region bordering the centromere of chromosome V of Podospora anserina by direct sequencing.</title>
        <authorList>
            <person name="Silar P."/>
            <person name="Barreau C."/>
            <person name="Debuchy R."/>
            <person name="Kicka S."/>
            <person name="Turcq B."/>
            <person name="Sainsard-Chanet A."/>
            <person name="Sellem C.H."/>
            <person name="Billault A."/>
            <person name="Cattolico L."/>
            <person name="Duprat S."/>
            <person name="Weissenbach J."/>
        </authorList>
    </citation>
    <scope>NUCLEOTIDE SEQUENCE [LARGE SCALE GENOMIC DNA]</scope>
    <source>
        <strain>s</strain>
    </source>
</reference>
<dbReference type="EMBL" id="BX088700">
    <property type="protein sequence ID" value="CAD60769.1"/>
    <property type="molecule type" value="Genomic_DNA"/>
</dbReference>
<dbReference type="SMR" id="Q874W3"/>
<dbReference type="VEuPathDB" id="FungiDB:PODANS_5_6150"/>
<dbReference type="GO" id="GO:0005737">
    <property type="term" value="C:cytoplasm"/>
    <property type="evidence" value="ECO:0007669"/>
    <property type="project" value="UniProtKB-SubCell"/>
</dbReference>
<dbReference type="GO" id="GO:0005634">
    <property type="term" value="C:nucleus"/>
    <property type="evidence" value="ECO:0007669"/>
    <property type="project" value="UniProtKB-SubCell"/>
</dbReference>
<dbReference type="GO" id="GO:0004865">
    <property type="term" value="F:protein serine/threonine phosphatase inhibitor activity"/>
    <property type="evidence" value="ECO:0007669"/>
    <property type="project" value="TreeGrafter"/>
</dbReference>
<dbReference type="GO" id="GO:0042149">
    <property type="term" value="P:cellular response to glucose starvation"/>
    <property type="evidence" value="ECO:0007669"/>
    <property type="project" value="InterPro"/>
</dbReference>
<dbReference type="GO" id="GO:0030071">
    <property type="term" value="P:regulation of mitotic metaphase/anaphase transition"/>
    <property type="evidence" value="ECO:0007669"/>
    <property type="project" value="InterPro"/>
</dbReference>
<dbReference type="CDD" id="cd02205">
    <property type="entry name" value="CBS_pair_SF"/>
    <property type="match status" value="1"/>
</dbReference>
<dbReference type="Gene3D" id="3.10.580.10">
    <property type="entry name" value="CBS-domain"/>
    <property type="match status" value="2"/>
</dbReference>
<dbReference type="InterPro" id="IPR050511">
    <property type="entry name" value="AMPK_gamma/SDS23_families"/>
</dbReference>
<dbReference type="InterPro" id="IPR000644">
    <property type="entry name" value="CBS_dom"/>
</dbReference>
<dbReference type="InterPro" id="IPR046342">
    <property type="entry name" value="CBS_dom_sf"/>
</dbReference>
<dbReference type="InterPro" id="IPR016711">
    <property type="entry name" value="Ssd23"/>
</dbReference>
<dbReference type="PANTHER" id="PTHR13780">
    <property type="entry name" value="AMP-ACTIVATED PROTEIN KINASE, GAMMA REGULATORY SUBUNIT"/>
    <property type="match status" value="1"/>
</dbReference>
<dbReference type="PANTHER" id="PTHR13780:SF36">
    <property type="entry name" value="CBS DOMAIN-CONTAINING PROTEIN"/>
    <property type="match status" value="1"/>
</dbReference>
<dbReference type="Pfam" id="PF00571">
    <property type="entry name" value="CBS"/>
    <property type="match status" value="2"/>
</dbReference>
<dbReference type="PIRSF" id="PIRSF018148">
    <property type="entry name" value="UCP018148_CBS_YBR214w"/>
    <property type="match status" value="1"/>
</dbReference>
<dbReference type="SMART" id="SM00116">
    <property type="entry name" value="CBS"/>
    <property type="match status" value="2"/>
</dbReference>
<dbReference type="SUPFAM" id="SSF54631">
    <property type="entry name" value="CBS-domain pair"/>
    <property type="match status" value="2"/>
</dbReference>
<dbReference type="PROSITE" id="PS51371">
    <property type="entry name" value="CBS"/>
    <property type="match status" value="2"/>
</dbReference>
<sequence>MDIPGAQESAANSSNSSLGATLSTSQTERNKSGHITAHRQSFAEDQRRPPPSPRSHRHPSLTQQAVQELMNHPPINRHANPQYAGRNWQEIAVGELAVADDVKWTDLDESVQDATLTLLKNHPTNAVLVRETPTSKRAISTFDYSDLNAYLLVVVGLAKPEEEQIELYDHIAKSAQAQTPVALREIQPILKKSELVALPAEATLDAAVEAFGSGIHRLLITNSAGEVIGILSQLRLLEFFWKEAVNFPVIDRLYGSVLRDLQIGSTQIIAVNADGPLADALLLMHNEGLTSVAVVDQGLNVLGNISTADLRLLTSTNNLPLLKRSCMHFISVILNERGVEHGRDSFPVFYVNPYSTLAHTVAKLVATRSHRMWVVETASPSPSAPATPLLQPVQLGVTAATAPPPTSVTGVGSSSSPGPQPTVLVSSQTPSAPQSPLPGQSFPSVPSASLPGAHVSGRLSGVVSLTDVLNLFAKSSGLRPSDPSEQRARRRRSSSASVRPSLDAGRGSVDFRR</sequence>
<organism>
    <name type="scientific">Podospora anserina</name>
    <name type="common">Pleurage anserina</name>
    <dbReference type="NCBI Taxonomy" id="2587412"/>
    <lineage>
        <taxon>Eukaryota</taxon>
        <taxon>Fungi</taxon>
        <taxon>Dikarya</taxon>
        <taxon>Ascomycota</taxon>
        <taxon>Pezizomycotina</taxon>
        <taxon>Sordariomycetes</taxon>
        <taxon>Sordariomycetidae</taxon>
        <taxon>Sordariales</taxon>
        <taxon>Podosporaceae</taxon>
        <taxon>Podospora</taxon>
    </lineage>
</organism>
<feature type="chain" id="PRO_0000324959" description="Protein SDS23">
    <location>
        <begin position="1"/>
        <end position="513"/>
    </location>
</feature>
<feature type="domain" description="CBS 1" evidence="2">
    <location>
        <begin position="190"/>
        <end position="249"/>
    </location>
</feature>
<feature type="domain" description="CBS 2" evidence="2">
    <location>
        <begin position="264"/>
        <end position="321"/>
    </location>
</feature>
<feature type="region of interest" description="Disordered" evidence="3">
    <location>
        <begin position="1"/>
        <end position="62"/>
    </location>
</feature>
<feature type="region of interest" description="Disordered" evidence="3">
    <location>
        <begin position="400"/>
        <end position="449"/>
    </location>
</feature>
<feature type="region of interest" description="Disordered" evidence="3">
    <location>
        <begin position="474"/>
        <end position="513"/>
    </location>
</feature>
<feature type="compositionally biased region" description="Low complexity" evidence="3">
    <location>
        <begin position="9"/>
        <end position="25"/>
    </location>
</feature>
<feature type="compositionally biased region" description="Low complexity" evidence="3">
    <location>
        <begin position="400"/>
        <end position="423"/>
    </location>
</feature>
<feature type="compositionally biased region" description="Polar residues" evidence="3">
    <location>
        <begin position="424"/>
        <end position="447"/>
    </location>
</feature>
<evidence type="ECO:0000250" key="1"/>
<evidence type="ECO:0000255" key="2">
    <source>
        <dbReference type="PROSITE-ProRule" id="PRU00703"/>
    </source>
</evidence>
<evidence type="ECO:0000256" key="3">
    <source>
        <dbReference type="SAM" id="MobiDB-lite"/>
    </source>
</evidence>
<evidence type="ECO:0000305" key="4"/>
<gene>
    <name type="primary">SDS23</name>
</gene>
<proteinExistence type="inferred from homology"/>
<comment type="function">
    <text evidence="1">Involved in DNA replication and cell separation.</text>
</comment>
<comment type="subcellular location">
    <subcellularLocation>
        <location evidence="1">Cytoplasm</location>
    </subcellularLocation>
    <subcellularLocation>
        <location evidence="1">Nucleus</location>
    </subcellularLocation>
</comment>
<comment type="similarity">
    <text evidence="4">Belongs to the SDS23 family.</text>
</comment>